<keyword id="KW-1185">Reference proteome</keyword>
<keyword id="KW-0687">Ribonucleoprotein</keyword>
<keyword id="KW-0689">Ribosomal protein</keyword>
<keyword id="KW-0694">RNA-binding</keyword>
<keyword id="KW-0699">rRNA-binding</keyword>
<reference key="1">
    <citation type="journal article" date="2002" name="Proc. Natl. Acad. Sci. U.S.A.">
        <title>Genome sequence of the hyperthermophilic crenarchaeon Pyrobaculum aerophilum.</title>
        <authorList>
            <person name="Fitz-Gibbon S.T."/>
            <person name="Ladner H."/>
            <person name="Kim U.-J."/>
            <person name="Stetter K.O."/>
            <person name="Simon M.I."/>
            <person name="Miller J.H."/>
        </authorList>
    </citation>
    <scope>NUCLEOTIDE SEQUENCE [LARGE SCALE GENOMIC DNA]</scope>
    <source>
        <strain>ATCC 51768 / DSM 7523 / JCM 9630 / CIP 104966 / NBRC 100827 / IM2</strain>
    </source>
</reference>
<evidence type="ECO:0000255" key="1">
    <source>
        <dbReference type="HAMAP-Rule" id="MF_01309"/>
    </source>
</evidence>
<evidence type="ECO:0000305" key="2"/>
<comment type="function">
    <text evidence="1">Binds the lower part of the 30S subunit head.</text>
</comment>
<comment type="subunit">
    <text evidence="1">Part of the 30S ribosomal subunit.</text>
</comment>
<comment type="similarity">
    <text evidence="1">Belongs to the universal ribosomal protein uS3 family.</text>
</comment>
<comment type="sequence caution" evidence="2">
    <conflict type="erroneous initiation">
        <sequence resource="EMBL-CDS" id="AAL63722"/>
    </conflict>
    <text>Truncated N-terminus.</text>
</comment>
<feature type="chain" id="PRO_0000130257" description="Small ribosomal subunit protein uS3">
    <location>
        <begin position="1"/>
        <end position="218"/>
    </location>
</feature>
<feature type="domain" description="KH type-2" evidence="1">
    <location>
        <begin position="2"/>
        <end position="71"/>
    </location>
</feature>
<name>RS3_PYRAE</name>
<gene>
    <name evidence="1" type="primary">rps3</name>
    <name type="ordered locus">PAE1779</name>
</gene>
<sequence length="218" mass="25016">MSAPQRRLPVYKKILEENKKKWMIKEFLEYRLSKYGYIDSEILKTPLGTRIVIYAERPSRIIGRKGAIVKEISNILTTKLGVENPQIDVIDISKIEAPEMFPKVVAYRIANAMAKGVRFRRVMFVAIRQLMEAGAKGFEIVVSGKLSTERARFEKQTYGKLYKIGYDAKNRVRRAVVHVLLKPGIYGIEVRIAPATLQYSDEYKIKPPVRPEAVQQQS</sequence>
<accession>Q8ZWI0</accession>
<protein>
    <recommendedName>
        <fullName evidence="1">Small ribosomal subunit protein uS3</fullName>
    </recommendedName>
    <alternativeName>
        <fullName evidence="2">30S ribosomal protein S3</fullName>
    </alternativeName>
</protein>
<organism>
    <name type="scientific">Pyrobaculum aerophilum (strain ATCC 51768 / DSM 7523 / JCM 9630 / CIP 104966 / NBRC 100827 / IM2)</name>
    <dbReference type="NCBI Taxonomy" id="178306"/>
    <lineage>
        <taxon>Archaea</taxon>
        <taxon>Thermoproteota</taxon>
        <taxon>Thermoprotei</taxon>
        <taxon>Thermoproteales</taxon>
        <taxon>Thermoproteaceae</taxon>
        <taxon>Pyrobaculum</taxon>
    </lineage>
</organism>
<proteinExistence type="inferred from homology"/>
<dbReference type="EMBL" id="AE009441">
    <property type="protein sequence ID" value="AAL63722.1"/>
    <property type="status" value="ALT_INIT"/>
    <property type="molecule type" value="Genomic_DNA"/>
</dbReference>
<dbReference type="RefSeq" id="WP_128621471.1">
    <property type="nucleotide sequence ID" value="NC_003364.1"/>
</dbReference>
<dbReference type="SMR" id="Q8ZWI0"/>
<dbReference type="FunCoup" id="Q8ZWI0">
    <property type="interactions" value="205"/>
</dbReference>
<dbReference type="STRING" id="178306.PAE1779"/>
<dbReference type="EnsemblBacteria" id="AAL63722">
    <property type="protein sequence ID" value="AAL63722"/>
    <property type="gene ID" value="PAE1779"/>
</dbReference>
<dbReference type="GeneID" id="1465973"/>
<dbReference type="KEGG" id="pai:PAE1779"/>
<dbReference type="PATRIC" id="fig|178306.9.peg.1313"/>
<dbReference type="eggNOG" id="arCOG04097">
    <property type="taxonomic scope" value="Archaea"/>
</dbReference>
<dbReference type="HOGENOM" id="CLU_058591_1_1_2"/>
<dbReference type="InParanoid" id="Q8ZWI0"/>
<dbReference type="Proteomes" id="UP000002439">
    <property type="component" value="Chromosome"/>
</dbReference>
<dbReference type="GO" id="GO:0022627">
    <property type="term" value="C:cytosolic small ribosomal subunit"/>
    <property type="evidence" value="ECO:0000318"/>
    <property type="project" value="GO_Central"/>
</dbReference>
<dbReference type="GO" id="GO:0019843">
    <property type="term" value="F:rRNA binding"/>
    <property type="evidence" value="ECO:0007669"/>
    <property type="project" value="UniProtKB-UniRule"/>
</dbReference>
<dbReference type="GO" id="GO:0003735">
    <property type="term" value="F:structural constituent of ribosome"/>
    <property type="evidence" value="ECO:0000318"/>
    <property type="project" value="GO_Central"/>
</dbReference>
<dbReference type="GO" id="GO:0006412">
    <property type="term" value="P:translation"/>
    <property type="evidence" value="ECO:0007669"/>
    <property type="project" value="UniProtKB-UniRule"/>
</dbReference>
<dbReference type="CDD" id="cd02411">
    <property type="entry name" value="KH-II_30S_S3_arch"/>
    <property type="match status" value="1"/>
</dbReference>
<dbReference type="FunFam" id="3.30.1140.32:FF:000021">
    <property type="entry name" value="30S ribosomal protein S3"/>
    <property type="match status" value="1"/>
</dbReference>
<dbReference type="FunFam" id="3.30.300.20:FF:000001">
    <property type="entry name" value="30S ribosomal protein S3"/>
    <property type="match status" value="1"/>
</dbReference>
<dbReference type="Gene3D" id="3.30.300.20">
    <property type="match status" value="1"/>
</dbReference>
<dbReference type="Gene3D" id="3.30.1140.32">
    <property type="entry name" value="Ribosomal protein S3, C-terminal domain"/>
    <property type="match status" value="1"/>
</dbReference>
<dbReference type="HAMAP" id="MF_01309_A">
    <property type="entry name" value="Ribosomal_uS3_A"/>
    <property type="match status" value="1"/>
</dbReference>
<dbReference type="InterPro" id="IPR004087">
    <property type="entry name" value="KH_dom"/>
</dbReference>
<dbReference type="InterPro" id="IPR015946">
    <property type="entry name" value="KH_dom-like_a/b"/>
</dbReference>
<dbReference type="InterPro" id="IPR004044">
    <property type="entry name" value="KH_dom_type_2"/>
</dbReference>
<dbReference type="InterPro" id="IPR009019">
    <property type="entry name" value="KH_sf_prok-type"/>
</dbReference>
<dbReference type="InterPro" id="IPR036419">
    <property type="entry name" value="Ribosomal_S3_C_sf"/>
</dbReference>
<dbReference type="InterPro" id="IPR027488">
    <property type="entry name" value="Ribosomal_uS3_arc"/>
</dbReference>
<dbReference type="InterPro" id="IPR001351">
    <property type="entry name" value="Ribosomal_uS3_C"/>
</dbReference>
<dbReference type="InterPro" id="IPR005703">
    <property type="entry name" value="Ribosomal_uS3_euk/arc"/>
</dbReference>
<dbReference type="NCBIfam" id="NF003219">
    <property type="entry name" value="PRK04191.1"/>
    <property type="match status" value="1"/>
</dbReference>
<dbReference type="NCBIfam" id="TIGR01008">
    <property type="entry name" value="uS3_euk_arch"/>
    <property type="match status" value="1"/>
</dbReference>
<dbReference type="PANTHER" id="PTHR11760">
    <property type="entry name" value="30S/40S RIBOSOMAL PROTEIN S3"/>
    <property type="match status" value="1"/>
</dbReference>
<dbReference type="PANTHER" id="PTHR11760:SF32">
    <property type="entry name" value="SMALL RIBOSOMAL SUBUNIT PROTEIN US3"/>
    <property type="match status" value="1"/>
</dbReference>
<dbReference type="Pfam" id="PF07650">
    <property type="entry name" value="KH_2"/>
    <property type="match status" value="1"/>
</dbReference>
<dbReference type="Pfam" id="PF00189">
    <property type="entry name" value="Ribosomal_S3_C"/>
    <property type="match status" value="1"/>
</dbReference>
<dbReference type="SMART" id="SM00322">
    <property type="entry name" value="KH"/>
    <property type="match status" value="1"/>
</dbReference>
<dbReference type="SUPFAM" id="SSF54814">
    <property type="entry name" value="Prokaryotic type KH domain (KH-domain type II)"/>
    <property type="match status" value="1"/>
</dbReference>
<dbReference type="SUPFAM" id="SSF54821">
    <property type="entry name" value="Ribosomal protein S3 C-terminal domain"/>
    <property type="match status" value="1"/>
</dbReference>
<dbReference type="PROSITE" id="PS50823">
    <property type="entry name" value="KH_TYPE_2"/>
    <property type="match status" value="1"/>
</dbReference>